<name>RT29_HUMAN</name>
<proteinExistence type="evidence at protein level"/>
<organism>
    <name type="scientific">Homo sapiens</name>
    <name type="common">Human</name>
    <dbReference type="NCBI Taxonomy" id="9606"/>
    <lineage>
        <taxon>Eukaryota</taxon>
        <taxon>Metazoa</taxon>
        <taxon>Chordata</taxon>
        <taxon>Craniata</taxon>
        <taxon>Vertebrata</taxon>
        <taxon>Euteleostomi</taxon>
        <taxon>Mammalia</taxon>
        <taxon>Eutheria</taxon>
        <taxon>Euarchontoglires</taxon>
        <taxon>Primates</taxon>
        <taxon>Haplorrhini</taxon>
        <taxon>Catarrhini</taxon>
        <taxon>Hominidae</taxon>
        <taxon>Homo</taxon>
    </lineage>
</organism>
<gene>
    <name evidence="10" type="primary">DAP3</name>
    <name evidence="10" type="synonym">MRPS29</name>
</gene>
<feature type="transit peptide" description="Mitochondrion" evidence="1">
    <location>
        <begin position="1"/>
        <end position="21"/>
    </location>
</feature>
<feature type="chain" id="PRO_0000087717" description="Small ribosomal subunit protein mS29">
    <location>
        <begin position="22"/>
        <end position="398"/>
    </location>
</feature>
<feature type="region of interest" description="Disordered" evidence="2">
    <location>
        <begin position="39"/>
        <end position="67"/>
    </location>
</feature>
<feature type="compositionally biased region" description="Basic and acidic residues" evidence="2">
    <location>
        <begin position="52"/>
        <end position="66"/>
    </location>
</feature>
<feature type="binding site" evidence="16">
    <location>
        <position position="100"/>
    </location>
    <ligand>
        <name>GTP</name>
        <dbReference type="ChEBI" id="CHEBI:37565"/>
    </ligand>
</feature>
<feature type="binding site" evidence="16">
    <location>
        <begin position="128"/>
        <end position="135"/>
    </location>
    <ligand>
        <name>GTP</name>
        <dbReference type="ChEBI" id="CHEBI:37565"/>
    </ligand>
</feature>
<feature type="modified residue" description="N6-acetyllysine" evidence="18">
    <location>
        <position position="175"/>
    </location>
</feature>
<feature type="modified residue" description="N6-acetyllysine" evidence="18">
    <location>
        <position position="207"/>
    </location>
</feature>
<feature type="splice variant" id="VSP_042790" description="In isoform 2." evidence="9">
    <location>
        <begin position="16"/>
        <end position="56"/>
    </location>
</feature>
<feature type="splice variant" id="VSP_044639" description="In isoform 3." evidence="9">
    <location>
        <begin position="57"/>
        <end position="90"/>
    </location>
</feature>
<feature type="sequence variant" id="VAR_090451" description="In PRLTS7; uncertain significance; no change in thermal stability; no change in GTPase activity." evidence="7">
    <original>T</original>
    <variation>I</variation>
    <location>
        <position position="132"/>
    </location>
</feature>
<feature type="sequence variant" id="VAR_061811" description="In dbSNP:rs57692591.">
    <original>V</original>
    <variation>F</variation>
    <location>
        <position position="240"/>
    </location>
</feature>
<feature type="sequence variant" id="VAR_090452" description="In PRLTS7; uncertain significance; decreased thermal stability; slightly decreased GTPase activity." evidence="7">
    <original>L</original>
    <variation>R</variation>
    <location>
        <position position="380"/>
    </location>
</feature>
<feature type="sequence variant" id="VAR_090453" description="In PRLTS7; uncertain significance; slightly decreased thermal stability; slightly decreased GTPase activity." evidence="7">
    <original>E</original>
    <variation>K</variation>
    <location>
        <position position="392"/>
    </location>
</feature>
<feature type="sequence variant" id="VAR_090454" description="In PRLTS7; likely pathogenic; decreased thermal stability; decreased GTPase activity." evidence="7">
    <original>C</original>
    <variation>Y</variation>
    <location>
        <position position="395"/>
    </location>
</feature>
<feature type="sequence conflict" description="In Ref. 3; BAG63624." evidence="15" ref="3">
    <original>D</original>
    <variation>Y</variation>
    <location>
        <position position="157"/>
    </location>
</feature>
<feature type="helix" evidence="19">
    <location>
        <begin position="56"/>
        <end position="58"/>
    </location>
</feature>
<feature type="helix" evidence="19">
    <location>
        <begin position="61"/>
        <end position="63"/>
    </location>
</feature>
<feature type="strand" evidence="19">
    <location>
        <begin position="67"/>
        <end position="70"/>
    </location>
</feature>
<feature type="helix" evidence="19">
    <location>
        <begin position="72"/>
        <end position="78"/>
    </location>
</feature>
<feature type="helix" evidence="19">
    <location>
        <begin position="85"/>
        <end position="94"/>
    </location>
</feature>
<feature type="strand" evidence="19">
    <location>
        <begin position="96"/>
        <end position="100"/>
    </location>
</feature>
<feature type="helix" evidence="19">
    <location>
        <begin position="103"/>
        <end position="113"/>
    </location>
</feature>
<feature type="strand" evidence="19">
    <location>
        <begin position="117"/>
        <end position="120"/>
    </location>
</feature>
<feature type="strand" evidence="19">
    <location>
        <begin position="123"/>
        <end position="129"/>
    </location>
</feature>
<feature type="helix" evidence="19">
    <location>
        <begin position="134"/>
        <end position="147"/>
    </location>
</feature>
<feature type="strand" evidence="19">
    <location>
        <begin position="151"/>
        <end position="156"/>
    </location>
</feature>
<feature type="helix" evidence="19">
    <location>
        <begin position="158"/>
        <end position="162"/>
    </location>
</feature>
<feature type="strand" evidence="19">
    <location>
        <begin position="177"/>
        <end position="179"/>
    </location>
</feature>
<feature type="helix" evidence="19">
    <location>
        <begin position="181"/>
        <end position="194"/>
    </location>
</feature>
<feature type="turn" evidence="19">
    <location>
        <begin position="195"/>
        <end position="197"/>
    </location>
</feature>
<feature type="helix" evidence="19">
    <location>
        <begin position="198"/>
        <end position="201"/>
    </location>
</feature>
<feature type="strand" evidence="19">
    <location>
        <begin position="208"/>
        <end position="213"/>
    </location>
</feature>
<feature type="helix" evidence="19">
    <location>
        <begin position="222"/>
        <end position="231"/>
    </location>
</feature>
<feature type="helix" evidence="19">
    <location>
        <begin position="233"/>
        <end position="235"/>
    </location>
</feature>
<feature type="helix" evidence="19">
    <location>
        <begin position="236"/>
        <end position="253"/>
    </location>
</feature>
<feature type="strand" evidence="19">
    <location>
        <begin position="258"/>
        <end position="263"/>
    </location>
</feature>
<feature type="helix" evidence="19">
    <location>
        <begin position="265"/>
        <end position="267"/>
    </location>
</feature>
<feature type="helix" evidence="19">
    <location>
        <begin position="284"/>
        <end position="286"/>
    </location>
</feature>
<feature type="helix" evidence="19">
    <location>
        <begin position="288"/>
        <end position="297"/>
    </location>
</feature>
<feature type="strand" evidence="20">
    <location>
        <begin position="298"/>
        <end position="300"/>
    </location>
</feature>
<feature type="strand" evidence="19">
    <location>
        <begin position="302"/>
        <end position="309"/>
    </location>
</feature>
<feature type="helix" evidence="19">
    <location>
        <begin position="325"/>
        <end position="337"/>
    </location>
</feature>
<feature type="strand" evidence="19">
    <location>
        <begin position="341"/>
        <end position="345"/>
    </location>
</feature>
<feature type="helix" evidence="19">
    <location>
        <begin position="350"/>
        <end position="362"/>
    </location>
</feature>
<feature type="strand" evidence="19">
    <location>
        <begin position="371"/>
        <end position="373"/>
    </location>
</feature>
<feature type="helix" evidence="19">
    <location>
        <begin position="374"/>
        <end position="384"/>
    </location>
</feature>
<feature type="helix" evidence="19">
    <location>
        <begin position="388"/>
        <end position="396"/>
    </location>
</feature>
<protein>
    <recommendedName>
        <fullName evidence="11">Small ribosomal subunit protein mS29</fullName>
        <ecNumber evidence="17">3.6.5.-</ecNumber>
    </recommendedName>
    <alternativeName>
        <fullName>28S ribosomal protein S29, mitochondrial</fullName>
        <shortName>MRP-S29</shortName>
        <shortName>S29mt</shortName>
    </alternativeName>
    <alternativeName>
        <fullName evidence="14">Death-associated protein 3</fullName>
        <shortName evidence="12">DAP-3</shortName>
    </alternativeName>
    <alternativeName>
        <fullName evidence="13">Ionizing radiation resistance conferring protein</fullName>
    </alternativeName>
</protein>
<dbReference type="EC" id="3.6.5.-" evidence="17"/>
<dbReference type="EMBL" id="U18321">
    <property type="protein sequence ID" value="AAA57443.1"/>
    <property type="status" value="ALT_FRAME"/>
    <property type="molecule type" value="mRNA"/>
</dbReference>
<dbReference type="EMBL" id="X83544">
    <property type="protein sequence ID" value="CAA58535.1"/>
    <property type="molecule type" value="mRNA"/>
</dbReference>
<dbReference type="EMBL" id="AK293117">
    <property type="protein sequence ID" value="BAF85806.1"/>
    <property type="molecule type" value="mRNA"/>
</dbReference>
<dbReference type="EMBL" id="AK298201">
    <property type="protein sequence ID" value="BAG60471.1"/>
    <property type="molecule type" value="mRNA"/>
</dbReference>
<dbReference type="EMBL" id="AK302281">
    <property type="protein sequence ID" value="BAG63624.1"/>
    <property type="molecule type" value="mRNA"/>
</dbReference>
<dbReference type="EMBL" id="BT019494">
    <property type="protein sequence ID" value="AAV38301.1"/>
    <property type="molecule type" value="mRNA"/>
</dbReference>
<dbReference type="EMBL" id="CR749790">
    <property type="protein sequence ID" value="CAH18651.1"/>
    <property type="molecule type" value="mRNA"/>
</dbReference>
<dbReference type="EMBL" id="AL162734">
    <property type="status" value="NOT_ANNOTATED_CDS"/>
    <property type="molecule type" value="Genomic_DNA"/>
</dbReference>
<dbReference type="EMBL" id="CH471121">
    <property type="protein sequence ID" value="EAW53044.1"/>
    <property type="molecule type" value="Genomic_DNA"/>
</dbReference>
<dbReference type="EMBL" id="CH471121">
    <property type="protein sequence ID" value="EAW53045.1"/>
    <property type="molecule type" value="Genomic_DNA"/>
</dbReference>
<dbReference type="EMBL" id="CH471121">
    <property type="protein sequence ID" value="EAW53047.1"/>
    <property type="molecule type" value="Genomic_DNA"/>
</dbReference>
<dbReference type="EMBL" id="CH471121">
    <property type="protein sequence ID" value="EAW53048.1"/>
    <property type="molecule type" value="Genomic_DNA"/>
</dbReference>
<dbReference type="EMBL" id="CH471121">
    <property type="protein sequence ID" value="EAW53049.1"/>
    <property type="molecule type" value="Genomic_DNA"/>
</dbReference>
<dbReference type="EMBL" id="CH471121">
    <property type="protein sequence ID" value="EAW53051.1"/>
    <property type="molecule type" value="Genomic_DNA"/>
</dbReference>
<dbReference type="EMBL" id="BC107487">
    <property type="protein sequence ID" value="AAI07488.1"/>
    <property type="molecule type" value="mRNA"/>
</dbReference>
<dbReference type="EMBL" id="BC107488">
    <property type="protein sequence ID" value="AAI07489.1"/>
    <property type="molecule type" value="mRNA"/>
</dbReference>
<dbReference type="CCDS" id="CCDS1120.1">
    <molecule id="P51398-1"/>
</dbReference>
<dbReference type="CCDS" id="CCDS55646.1">
    <molecule id="P51398-3"/>
</dbReference>
<dbReference type="CCDS" id="CCDS55647.1">
    <molecule id="P51398-2"/>
</dbReference>
<dbReference type="PIR" id="G01589">
    <property type="entry name" value="G01589"/>
</dbReference>
<dbReference type="RefSeq" id="NP_001186778.1">
    <molecule id="P51398-1"/>
    <property type="nucleotide sequence ID" value="NM_001199849.1"/>
</dbReference>
<dbReference type="RefSeq" id="NP_001186779.1">
    <molecule id="P51398-3"/>
    <property type="nucleotide sequence ID" value="NM_001199850.1"/>
</dbReference>
<dbReference type="RefSeq" id="NP_001186780.1">
    <molecule id="P51398-2"/>
    <property type="nucleotide sequence ID" value="NM_001199851.1"/>
</dbReference>
<dbReference type="RefSeq" id="NP_004623.1">
    <molecule id="P51398-1"/>
    <property type="nucleotide sequence ID" value="NM_004632.4"/>
</dbReference>
<dbReference type="RefSeq" id="NP_387506.1">
    <molecule id="P51398-1"/>
    <property type="nucleotide sequence ID" value="NM_033657.2"/>
</dbReference>
<dbReference type="RefSeq" id="XP_005245537.1">
    <property type="nucleotide sequence ID" value="XM_005245480.2"/>
</dbReference>
<dbReference type="RefSeq" id="XP_005245538.1">
    <property type="nucleotide sequence ID" value="XM_005245481.2"/>
</dbReference>
<dbReference type="RefSeq" id="XP_016857780.1">
    <property type="nucleotide sequence ID" value="XM_017002291.1"/>
</dbReference>
<dbReference type="RefSeq" id="XP_016857781.1">
    <molecule id="P51398-2"/>
    <property type="nucleotide sequence ID" value="XM_017002292.2"/>
</dbReference>
<dbReference type="RefSeq" id="XP_016857782.1">
    <property type="nucleotide sequence ID" value="XM_017002293.1"/>
</dbReference>
<dbReference type="RefSeq" id="XP_024305465.1">
    <molecule id="P51398-1"/>
    <property type="nucleotide sequence ID" value="XM_024449697.2"/>
</dbReference>
<dbReference type="RefSeq" id="XP_047286037.1">
    <molecule id="P51398-1"/>
    <property type="nucleotide sequence ID" value="XM_047430081.1"/>
</dbReference>
<dbReference type="RefSeq" id="XP_047286046.1">
    <molecule id="P51398-3"/>
    <property type="nucleotide sequence ID" value="XM_047430090.1"/>
</dbReference>
<dbReference type="RefSeq" id="XP_047286048.1">
    <molecule id="P51398-2"/>
    <property type="nucleotide sequence ID" value="XM_047430092.1"/>
</dbReference>
<dbReference type="RefSeq" id="XP_047286049.1">
    <molecule id="P51398-2"/>
    <property type="nucleotide sequence ID" value="XM_047430093.1"/>
</dbReference>
<dbReference type="RefSeq" id="XP_054194638.1">
    <molecule id="P51398-3"/>
    <property type="nucleotide sequence ID" value="XM_054338663.1"/>
</dbReference>
<dbReference type="RefSeq" id="XP_054194639.1">
    <molecule id="P51398-2"/>
    <property type="nucleotide sequence ID" value="XM_054338664.1"/>
</dbReference>
<dbReference type="PDB" id="3J9M">
    <property type="method" value="EM"/>
    <property type="resolution" value="3.50 A"/>
    <property type="chains" value="AX=1-398"/>
</dbReference>
<dbReference type="PDB" id="6NU2">
    <property type="method" value="EM"/>
    <property type="resolution" value="3.90 A"/>
    <property type="chains" value="AX=51-398"/>
</dbReference>
<dbReference type="PDB" id="6NU3">
    <property type="method" value="EM"/>
    <property type="resolution" value="4.40 A"/>
    <property type="chains" value="AX=1-398"/>
</dbReference>
<dbReference type="PDB" id="6RW4">
    <property type="method" value="EM"/>
    <property type="resolution" value="2.97 A"/>
    <property type="chains" value="X=1-398"/>
</dbReference>
<dbReference type="PDB" id="6RW5">
    <property type="method" value="EM"/>
    <property type="resolution" value="3.14 A"/>
    <property type="chains" value="X=1-398"/>
</dbReference>
<dbReference type="PDB" id="6VLZ">
    <property type="method" value="EM"/>
    <property type="resolution" value="2.97 A"/>
    <property type="chains" value="AX=1-398"/>
</dbReference>
<dbReference type="PDB" id="6VMI">
    <property type="method" value="EM"/>
    <property type="resolution" value="2.96 A"/>
    <property type="chains" value="AX=1-398"/>
</dbReference>
<dbReference type="PDB" id="6ZM5">
    <property type="method" value="EM"/>
    <property type="resolution" value="2.89 A"/>
    <property type="chains" value="AX=1-398"/>
</dbReference>
<dbReference type="PDB" id="6ZM6">
    <property type="method" value="EM"/>
    <property type="resolution" value="2.59 A"/>
    <property type="chains" value="AX=1-398"/>
</dbReference>
<dbReference type="PDB" id="6ZS9">
    <property type="method" value="EM"/>
    <property type="resolution" value="4.00 A"/>
    <property type="chains" value="AX=51-398"/>
</dbReference>
<dbReference type="PDB" id="6ZSA">
    <property type="method" value="EM"/>
    <property type="resolution" value="4.00 A"/>
    <property type="chains" value="AX=51-398"/>
</dbReference>
<dbReference type="PDB" id="6ZSB">
    <property type="method" value="EM"/>
    <property type="resolution" value="4.50 A"/>
    <property type="chains" value="AX=51-398"/>
</dbReference>
<dbReference type="PDB" id="6ZSC">
    <property type="method" value="EM"/>
    <property type="resolution" value="3.50 A"/>
    <property type="chains" value="AX=51-398"/>
</dbReference>
<dbReference type="PDB" id="6ZSD">
    <property type="method" value="EM"/>
    <property type="resolution" value="3.70 A"/>
    <property type="chains" value="AX=51-398"/>
</dbReference>
<dbReference type="PDB" id="6ZSE">
    <property type="method" value="EM"/>
    <property type="resolution" value="5.00 A"/>
    <property type="chains" value="AX=51-398"/>
</dbReference>
<dbReference type="PDB" id="6ZSG">
    <property type="method" value="EM"/>
    <property type="resolution" value="4.00 A"/>
    <property type="chains" value="AX=51-398"/>
</dbReference>
<dbReference type="PDB" id="7A5F">
    <property type="method" value="EM"/>
    <property type="resolution" value="4.40 A"/>
    <property type="chains" value="X6=1-398"/>
</dbReference>
<dbReference type="PDB" id="7A5G">
    <property type="method" value="EM"/>
    <property type="resolution" value="4.33 A"/>
    <property type="chains" value="X6=1-398"/>
</dbReference>
<dbReference type="PDB" id="7A5I">
    <property type="method" value="EM"/>
    <property type="resolution" value="3.70 A"/>
    <property type="chains" value="X6=1-398"/>
</dbReference>
<dbReference type="PDB" id="7A5K">
    <property type="method" value="EM"/>
    <property type="resolution" value="3.70 A"/>
    <property type="chains" value="X6=1-398"/>
</dbReference>
<dbReference type="PDB" id="7L08">
    <property type="method" value="EM"/>
    <property type="resolution" value="3.49 A"/>
    <property type="chains" value="AX=1-398"/>
</dbReference>
<dbReference type="PDB" id="7OG4">
    <property type="method" value="EM"/>
    <property type="resolution" value="3.80 A"/>
    <property type="chains" value="AX=1-398"/>
</dbReference>
<dbReference type="PDB" id="7P2E">
    <property type="method" value="EM"/>
    <property type="resolution" value="2.40 A"/>
    <property type="chains" value="X=1-398"/>
</dbReference>
<dbReference type="PDB" id="7PNX">
    <property type="method" value="EM"/>
    <property type="resolution" value="2.76 A"/>
    <property type="chains" value="X=1-398"/>
</dbReference>
<dbReference type="PDB" id="7PNY">
    <property type="method" value="EM"/>
    <property type="resolution" value="3.06 A"/>
    <property type="chains" value="X=1-398"/>
</dbReference>
<dbReference type="PDB" id="7PNZ">
    <property type="method" value="EM"/>
    <property type="resolution" value="3.09 A"/>
    <property type="chains" value="X=1-398"/>
</dbReference>
<dbReference type="PDB" id="7PO0">
    <property type="method" value="EM"/>
    <property type="resolution" value="2.90 A"/>
    <property type="chains" value="X=1-398"/>
</dbReference>
<dbReference type="PDB" id="7PO1">
    <property type="method" value="EM"/>
    <property type="resolution" value="2.92 A"/>
    <property type="chains" value="X=1-398"/>
</dbReference>
<dbReference type="PDB" id="7PO2">
    <property type="method" value="EM"/>
    <property type="resolution" value="3.09 A"/>
    <property type="chains" value="X=1-398"/>
</dbReference>
<dbReference type="PDB" id="7PO3">
    <property type="method" value="EM"/>
    <property type="resolution" value="2.92 A"/>
    <property type="chains" value="X=1-398"/>
</dbReference>
<dbReference type="PDB" id="7QI4">
    <property type="method" value="EM"/>
    <property type="resolution" value="2.21 A"/>
    <property type="chains" value="AX=1-398"/>
</dbReference>
<dbReference type="PDB" id="7QI5">
    <property type="method" value="EM"/>
    <property type="resolution" value="2.63 A"/>
    <property type="chains" value="AX=1-398"/>
</dbReference>
<dbReference type="PDB" id="7QI6">
    <property type="method" value="EM"/>
    <property type="resolution" value="2.98 A"/>
    <property type="chains" value="AX=1-398"/>
</dbReference>
<dbReference type="PDB" id="8ANY">
    <property type="method" value="EM"/>
    <property type="resolution" value="2.85 A"/>
    <property type="chains" value="AX=1-398"/>
</dbReference>
<dbReference type="PDB" id="8CSP">
    <property type="method" value="EM"/>
    <property type="resolution" value="2.66 A"/>
    <property type="chains" value="X=1-398"/>
</dbReference>
<dbReference type="PDB" id="8CSQ">
    <property type="method" value="EM"/>
    <property type="resolution" value="2.54 A"/>
    <property type="chains" value="X=1-398"/>
</dbReference>
<dbReference type="PDB" id="8CSR">
    <property type="method" value="EM"/>
    <property type="resolution" value="2.54 A"/>
    <property type="chains" value="X=1-398"/>
</dbReference>
<dbReference type="PDB" id="8CSS">
    <property type="method" value="EM"/>
    <property type="resolution" value="2.36 A"/>
    <property type="chains" value="X=1-398"/>
</dbReference>
<dbReference type="PDB" id="8CST">
    <property type="method" value="EM"/>
    <property type="resolution" value="2.85 A"/>
    <property type="chains" value="X=1-398"/>
</dbReference>
<dbReference type="PDB" id="8CSU">
    <property type="method" value="EM"/>
    <property type="resolution" value="3.03 A"/>
    <property type="chains" value="X=1-398"/>
</dbReference>
<dbReference type="PDB" id="8K2A">
    <property type="method" value="EM"/>
    <property type="resolution" value="2.90 A"/>
    <property type="chains" value="Se=1-398"/>
</dbReference>
<dbReference type="PDB" id="8OIR">
    <property type="method" value="EM"/>
    <property type="resolution" value="3.10 A"/>
    <property type="chains" value="AX=1-398"/>
</dbReference>
<dbReference type="PDB" id="8OIS">
    <property type="method" value="EM"/>
    <property type="resolution" value="3.00 A"/>
    <property type="chains" value="AX=1-398"/>
</dbReference>
<dbReference type="PDB" id="8QRK">
    <property type="method" value="EM"/>
    <property type="resolution" value="6.69 A"/>
    <property type="chains" value="X=1-398"/>
</dbReference>
<dbReference type="PDB" id="8QRL">
    <property type="method" value="EM"/>
    <property type="resolution" value="3.34 A"/>
    <property type="chains" value="X=1-398"/>
</dbReference>
<dbReference type="PDB" id="8QRM">
    <property type="method" value="EM"/>
    <property type="resolution" value="3.05 A"/>
    <property type="chains" value="X=1-398"/>
</dbReference>
<dbReference type="PDB" id="8QRN">
    <property type="method" value="EM"/>
    <property type="resolution" value="2.98 A"/>
    <property type="chains" value="X=1-398"/>
</dbReference>
<dbReference type="PDB" id="8RRI">
    <property type="method" value="EM"/>
    <property type="resolution" value="2.40 A"/>
    <property type="chains" value="AX=1-398"/>
</dbReference>
<dbReference type="PDB" id="8XT0">
    <property type="method" value="EM"/>
    <property type="resolution" value="3.20 A"/>
    <property type="chains" value="Se=1-398"/>
</dbReference>
<dbReference type="PDB" id="8XT2">
    <property type="method" value="EM"/>
    <property type="resolution" value="3.30 A"/>
    <property type="chains" value="Se=1-398"/>
</dbReference>
<dbReference type="PDBsum" id="3J9M"/>
<dbReference type="PDBsum" id="6NU2"/>
<dbReference type="PDBsum" id="6NU3"/>
<dbReference type="PDBsum" id="6RW4"/>
<dbReference type="PDBsum" id="6RW5"/>
<dbReference type="PDBsum" id="6VLZ"/>
<dbReference type="PDBsum" id="6VMI"/>
<dbReference type="PDBsum" id="6ZM5"/>
<dbReference type="PDBsum" id="6ZM6"/>
<dbReference type="PDBsum" id="6ZS9"/>
<dbReference type="PDBsum" id="6ZSA"/>
<dbReference type="PDBsum" id="6ZSB"/>
<dbReference type="PDBsum" id="6ZSC"/>
<dbReference type="PDBsum" id="6ZSD"/>
<dbReference type="PDBsum" id="6ZSE"/>
<dbReference type="PDBsum" id="6ZSG"/>
<dbReference type="PDBsum" id="7A5F"/>
<dbReference type="PDBsum" id="7A5G"/>
<dbReference type="PDBsum" id="7A5I"/>
<dbReference type="PDBsum" id="7A5K"/>
<dbReference type="PDBsum" id="7L08"/>
<dbReference type="PDBsum" id="7OG4"/>
<dbReference type="PDBsum" id="7P2E"/>
<dbReference type="PDBsum" id="7PNX"/>
<dbReference type="PDBsum" id="7PNY"/>
<dbReference type="PDBsum" id="7PNZ"/>
<dbReference type="PDBsum" id="7PO0"/>
<dbReference type="PDBsum" id="7PO1"/>
<dbReference type="PDBsum" id="7PO2"/>
<dbReference type="PDBsum" id="7PO3"/>
<dbReference type="PDBsum" id="7QI4"/>
<dbReference type="PDBsum" id="7QI5"/>
<dbReference type="PDBsum" id="7QI6"/>
<dbReference type="PDBsum" id="8ANY"/>
<dbReference type="PDBsum" id="8CSP"/>
<dbReference type="PDBsum" id="8CSQ"/>
<dbReference type="PDBsum" id="8CSR"/>
<dbReference type="PDBsum" id="8CSS"/>
<dbReference type="PDBsum" id="8CST"/>
<dbReference type="PDBsum" id="8CSU"/>
<dbReference type="PDBsum" id="8K2A"/>
<dbReference type="PDBsum" id="8OIR"/>
<dbReference type="PDBsum" id="8OIS"/>
<dbReference type="PDBsum" id="8QRK"/>
<dbReference type="PDBsum" id="8QRL"/>
<dbReference type="PDBsum" id="8QRM"/>
<dbReference type="PDBsum" id="8QRN"/>
<dbReference type="PDBsum" id="8RRI"/>
<dbReference type="PDBsum" id="8XT0"/>
<dbReference type="PDBsum" id="8XT2"/>
<dbReference type="EMDB" id="EMD-0514"/>
<dbReference type="EMDB" id="EMD-0515"/>
<dbReference type="EMDB" id="EMD-10021"/>
<dbReference type="EMDB" id="EMD-10022"/>
<dbReference type="EMDB" id="EMD-11278"/>
<dbReference type="EMDB" id="EMD-11279"/>
<dbReference type="EMDB" id="EMD-11390"/>
<dbReference type="EMDB" id="EMD-11391"/>
<dbReference type="EMDB" id="EMD-11392"/>
<dbReference type="EMDB" id="EMD-11393"/>
<dbReference type="EMDB" id="EMD-11394"/>
<dbReference type="EMDB" id="EMD-11395"/>
<dbReference type="EMDB" id="EMD-11397"/>
<dbReference type="EMDB" id="EMD-11641"/>
<dbReference type="EMDB" id="EMD-11642"/>
<dbReference type="EMDB" id="EMD-11644"/>
<dbReference type="EMDB" id="EMD-11646"/>
<dbReference type="EMDB" id="EMD-12877"/>
<dbReference type="EMDB" id="EMD-13170"/>
<dbReference type="EMDB" id="EMD-13555"/>
<dbReference type="EMDB" id="EMD-13556"/>
<dbReference type="EMDB" id="EMD-13557"/>
<dbReference type="EMDB" id="EMD-13558"/>
<dbReference type="EMDB" id="EMD-13559"/>
<dbReference type="EMDB" id="EMD-13560"/>
<dbReference type="EMDB" id="EMD-13561"/>
<dbReference type="EMDB" id="EMD-13980"/>
<dbReference type="EMDB" id="EMD-13981"/>
<dbReference type="EMDB" id="EMD-13982"/>
<dbReference type="EMDB" id="EMD-15544"/>
<dbReference type="EMDB" id="EMD-16897"/>
<dbReference type="EMDB" id="EMD-16898"/>
<dbReference type="EMDB" id="EMD-19460"/>
<dbReference type="EMDB" id="EMD-21233"/>
<dbReference type="EMDB" id="EMD-21242"/>
<dbReference type="EMDB" id="EMD-23096"/>
<dbReference type="EMDB" id="EMD-26966"/>
<dbReference type="EMDB" id="EMD-26967"/>
<dbReference type="EMDB" id="EMD-26968"/>
<dbReference type="EMDB" id="EMD-26969"/>
<dbReference type="EMDB" id="EMD-26970"/>
<dbReference type="EMDB" id="EMD-26971"/>
<dbReference type="EMDB" id="EMD-36836"/>
<dbReference type="EMDB" id="EMD-38632"/>
<dbReference type="EMDB" id="EMD-38634"/>
<dbReference type="SMR" id="P51398"/>
<dbReference type="BioGRID" id="113587">
    <property type="interactions" value="343"/>
</dbReference>
<dbReference type="ComplexPortal" id="CPX-5225">
    <property type="entry name" value="28S mitochondrial small ribosomal subunit"/>
</dbReference>
<dbReference type="CORUM" id="P51398"/>
<dbReference type="FunCoup" id="P51398">
    <property type="interactions" value="3105"/>
</dbReference>
<dbReference type="IntAct" id="P51398">
    <property type="interactions" value="164"/>
</dbReference>
<dbReference type="MINT" id="P51398"/>
<dbReference type="STRING" id="9606.ENSP00000357320"/>
<dbReference type="ChEMBL" id="CHEMBL4295776"/>
<dbReference type="GlyGen" id="P51398">
    <property type="glycosylation" value="1 site, 1 O-linked glycan (1 site)"/>
</dbReference>
<dbReference type="iPTMnet" id="P51398"/>
<dbReference type="PhosphoSitePlus" id="P51398"/>
<dbReference type="SwissPalm" id="P51398"/>
<dbReference type="BioMuta" id="DAP3"/>
<dbReference type="DMDM" id="1706299"/>
<dbReference type="jPOST" id="P51398"/>
<dbReference type="MassIVE" id="P51398"/>
<dbReference type="PaxDb" id="9606-ENSP00000357320"/>
<dbReference type="PeptideAtlas" id="P51398"/>
<dbReference type="ProteomicsDB" id="16866"/>
<dbReference type="ProteomicsDB" id="56303">
    <molecule id="P51398-1"/>
</dbReference>
<dbReference type="ProteomicsDB" id="56304">
    <molecule id="P51398-2"/>
</dbReference>
<dbReference type="Pumba" id="P51398"/>
<dbReference type="Antibodypedia" id="1656">
    <property type="antibodies" value="486 antibodies from 37 providers"/>
</dbReference>
<dbReference type="DNASU" id="7818"/>
<dbReference type="Ensembl" id="ENST00000343043.7">
    <molecule id="P51398-1"/>
    <property type="protein sequence ID" value="ENSP00000341692.3"/>
    <property type="gene ID" value="ENSG00000132676.16"/>
</dbReference>
<dbReference type="Ensembl" id="ENST00000368336.10">
    <molecule id="P51398-1"/>
    <property type="protein sequence ID" value="ENSP00000357320.5"/>
    <property type="gene ID" value="ENSG00000132676.16"/>
</dbReference>
<dbReference type="Ensembl" id="ENST00000421487.6">
    <molecule id="P51398-3"/>
    <property type="protein sequence ID" value="ENSP00000412605.2"/>
    <property type="gene ID" value="ENSG00000132676.16"/>
</dbReference>
<dbReference type="Ensembl" id="ENST00000471642.6">
    <molecule id="P51398-2"/>
    <property type="protein sequence ID" value="ENSP00000476592.1"/>
    <property type="gene ID" value="ENSG00000132676.16"/>
</dbReference>
<dbReference type="Ensembl" id="ENST00000535183.5">
    <molecule id="P51398-2"/>
    <property type="protein sequence ID" value="ENSP00000445003.1"/>
    <property type="gene ID" value="ENSG00000132676.16"/>
</dbReference>
<dbReference type="GeneID" id="7818"/>
<dbReference type="KEGG" id="hsa:7818"/>
<dbReference type="MANE-Select" id="ENST00000368336.10">
    <property type="protein sequence ID" value="ENSP00000357320.5"/>
    <property type="RefSeq nucleotide sequence ID" value="NM_004632.4"/>
    <property type="RefSeq protein sequence ID" value="NP_004623.1"/>
</dbReference>
<dbReference type="UCSC" id="uc001flq.4">
    <molecule id="P51398-1"/>
    <property type="organism name" value="human"/>
</dbReference>
<dbReference type="AGR" id="HGNC:2673"/>
<dbReference type="CTD" id="7818"/>
<dbReference type="DisGeNET" id="7818"/>
<dbReference type="GeneCards" id="DAP3"/>
<dbReference type="HGNC" id="HGNC:2673">
    <property type="gene designation" value="DAP3"/>
</dbReference>
<dbReference type="HPA" id="ENSG00000132676">
    <property type="expression patterns" value="Low tissue specificity"/>
</dbReference>
<dbReference type="MalaCards" id="DAP3"/>
<dbReference type="MIM" id="602074">
    <property type="type" value="gene"/>
</dbReference>
<dbReference type="MIM" id="621101">
    <property type="type" value="phenotype"/>
</dbReference>
<dbReference type="neXtProt" id="NX_P51398"/>
<dbReference type="OpenTargets" id="ENSG00000132676"/>
<dbReference type="PharmGKB" id="PA27141"/>
<dbReference type="VEuPathDB" id="HostDB:ENSG00000132676"/>
<dbReference type="eggNOG" id="KOG3928">
    <property type="taxonomic scope" value="Eukaryota"/>
</dbReference>
<dbReference type="GeneTree" id="ENSGT00390000015248"/>
<dbReference type="HOGENOM" id="CLU_048181_0_0_1"/>
<dbReference type="InParanoid" id="P51398"/>
<dbReference type="OMA" id="DITNYDW"/>
<dbReference type="OrthoDB" id="274828at2759"/>
<dbReference type="PAN-GO" id="P51398">
    <property type="GO annotations" value="2 GO annotations based on evolutionary models"/>
</dbReference>
<dbReference type="PhylomeDB" id="P51398"/>
<dbReference type="TreeFam" id="TF313726"/>
<dbReference type="PathwayCommons" id="P51398"/>
<dbReference type="Reactome" id="R-HSA-5368286">
    <property type="pathway name" value="Mitochondrial translation initiation"/>
</dbReference>
<dbReference type="Reactome" id="R-HSA-5389840">
    <property type="pathway name" value="Mitochondrial translation elongation"/>
</dbReference>
<dbReference type="Reactome" id="R-HSA-5419276">
    <property type="pathway name" value="Mitochondrial translation termination"/>
</dbReference>
<dbReference type="SignaLink" id="P51398"/>
<dbReference type="SIGNOR" id="P51398"/>
<dbReference type="BioGRID-ORCS" id="7818">
    <property type="hits" value="525 hits in 1195 CRISPR screens"/>
</dbReference>
<dbReference type="ChiTaRS" id="DAP3">
    <property type="organism name" value="human"/>
</dbReference>
<dbReference type="GeneWiki" id="DAP3"/>
<dbReference type="GenomeRNAi" id="7818"/>
<dbReference type="Pharos" id="P51398">
    <property type="development level" value="Tbio"/>
</dbReference>
<dbReference type="PRO" id="PR:P51398"/>
<dbReference type="Proteomes" id="UP000005640">
    <property type="component" value="Chromosome 1"/>
</dbReference>
<dbReference type="RNAct" id="P51398">
    <property type="molecule type" value="protein"/>
</dbReference>
<dbReference type="Bgee" id="ENSG00000132676">
    <property type="expression patterns" value="Expressed in body of pancreas and 205 other cell types or tissues"/>
</dbReference>
<dbReference type="ExpressionAtlas" id="P51398">
    <property type="expression patterns" value="baseline and differential"/>
</dbReference>
<dbReference type="GO" id="GO:0005743">
    <property type="term" value="C:mitochondrial inner membrane"/>
    <property type="evidence" value="ECO:0000304"/>
    <property type="project" value="Reactome"/>
</dbReference>
<dbReference type="GO" id="GO:0005763">
    <property type="term" value="C:mitochondrial small ribosomal subunit"/>
    <property type="evidence" value="ECO:0000250"/>
    <property type="project" value="UniProtKB"/>
</dbReference>
<dbReference type="GO" id="GO:0005739">
    <property type="term" value="C:mitochondrion"/>
    <property type="evidence" value="ECO:0000314"/>
    <property type="project" value="HPA"/>
</dbReference>
<dbReference type="GO" id="GO:0005654">
    <property type="term" value="C:nucleoplasm"/>
    <property type="evidence" value="ECO:0000314"/>
    <property type="project" value="HPA"/>
</dbReference>
<dbReference type="GO" id="GO:0005525">
    <property type="term" value="F:GTP binding"/>
    <property type="evidence" value="ECO:0007669"/>
    <property type="project" value="UniProtKB-KW"/>
</dbReference>
<dbReference type="GO" id="GO:0003723">
    <property type="term" value="F:RNA binding"/>
    <property type="evidence" value="ECO:0007005"/>
    <property type="project" value="UniProtKB"/>
</dbReference>
<dbReference type="GO" id="GO:0003735">
    <property type="term" value="F:structural constituent of ribosome"/>
    <property type="evidence" value="ECO:0000318"/>
    <property type="project" value="GO_Central"/>
</dbReference>
<dbReference type="GO" id="GO:0008637">
    <property type="term" value="P:apoptotic mitochondrial changes"/>
    <property type="evidence" value="ECO:0007669"/>
    <property type="project" value="Ensembl"/>
</dbReference>
<dbReference type="GO" id="GO:0097190">
    <property type="term" value="P:apoptotic signaling pathway"/>
    <property type="evidence" value="ECO:0000304"/>
    <property type="project" value="ProtInc"/>
</dbReference>
<dbReference type="GO" id="GO:0032543">
    <property type="term" value="P:mitochondrial translation"/>
    <property type="evidence" value="ECO:0000303"/>
    <property type="project" value="ComplexPortal"/>
</dbReference>
<dbReference type="InterPro" id="IPR027417">
    <property type="entry name" value="P-loop_NTPase"/>
</dbReference>
<dbReference type="InterPro" id="IPR019368">
    <property type="entry name" value="Ribosomal_mS29"/>
</dbReference>
<dbReference type="InterPro" id="IPR008092">
    <property type="entry name" value="Ribosomal_mS29_met"/>
</dbReference>
<dbReference type="PANTHER" id="PTHR12810">
    <property type="entry name" value="MITOCHONDRIAL 28S RIBOSOMAL PROTEIN S29"/>
    <property type="match status" value="1"/>
</dbReference>
<dbReference type="PANTHER" id="PTHR12810:SF0">
    <property type="entry name" value="SMALL RIBOSOMAL SUBUNIT PROTEIN MS29"/>
    <property type="match status" value="1"/>
</dbReference>
<dbReference type="Pfam" id="PF10236">
    <property type="entry name" value="DAP3"/>
    <property type="match status" value="1"/>
</dbReference>
<dbReference type="PRINTS" id="PR01716">
    <property type="entry name" value="DEATHASSOCP3"/>
</dbReference>
<dbReference type="SUPFAM" id="SSF52540">
    <property type="entry name" value="P-loop containing nucleoside triphosphate hydrolases"/>
    <property type="match status" value="1"/>
</dbReference>
<comment type="function">
    <text evidence="7 8">As a component of the mitochondrial small ribosomal subunit, it plays a role in the translation of mitochondrial mRNAs (PubMed:39701103). Involved in mediating interferon-gamma-induced cell death (PubMed:7499268). Displays GTPase activity in vitro (PubMed:39701103).</text>
</comment>
<comment type="catalytic activity">
    <reaction evidence="17">
        <text>GTP + H2O = GDP + phosphate + H(+)</text>
        <dbReference type="Rhea" id="RHEA:19669"/>
        <dbReference type="ChEBI" id="CHEBI:15377"/>
        <dbReference type="ChEBI" id="CHEBI:15378"/>
        <dbReference type="ChEBI" id="CHEBI:37565"/>
        <dbReference type="ChEBI" id="CHEBI:43474"/>
        <dbReference type="ChEBI" id="CHEBI:58189"/>
    </reaction>
</comment>
<comment type="subunit">
    <text evidence="4 5 6">Component of the mitochondrial small ribosomal subunit (mt-SSU). Mature mammalian 55S mitochondrial ribosomes consist of a small (28S) and a large (39S) subunit. The 28S small subunit contains a 12S ribosomal RNA (12S mt-rRNA) and 30 different proteins. The 39S large subunit contains a 16S rRNA (16S mt-rRNA), a copy of mitochondrial valine transfer RNA (mt-tRNA(Val)), which plays an integral structural role, and 52 different proteins (PubMed:25838379). Interacts with DELE1 (PubMed:20563667). Interacts with NOA1 (PubMed:19103604).</text>
</comment>
<comment type="interaction">
    <interactant intactId="EBI-355912">
        <id>P51398</id>
    </interactant>
    <interactant intactId="EBI-2513649">
        <id>P82673</id>
        <label>MRPS35</label>
    </interactant>
    <organismsDiffer>false</organismsDiffer>
    <experiments>2</experiments>
</comment>
<comment type="interaction">
    <interactant intactId="EBI-355912">
        <id>P51398</id>
    </interactant>
    <interactant intactId="EBI-717871">
        <id>Q8NC60</id>
        <label>NOA1</label>
    </interactant>
    <organismsDiffer>false</organismsDiffer>
    <experiments>5</experiments>
</comment>
<comment type="subcellular location">
    <subcellularLocation>
        <location evidence="3 5">Mitochondrion</location>
    </subcellularLocation>
</comment>
<comment type="alternative products">
    <event type="alternative splicing"/>
    <isoform>
        <id>P51398-1</id>
        <name>1</name>
        <sequence type="displayed"/>
    </isoform>
    <isoform>
        <id>P51398-2</id>
        <name>2</name>
        <sequence type="described" ref="VSP_042790"/>
    </isoform>
    <isoform>
        <id>P51398-3</id>
        <name>3</name>
        <sequence type="described" ref="VSP_044639"/>
    </isoform>
</comment>
<comment type="tissue specificity">
    <text>Ubiquitous.</text>
</comment>
<comment type="disease" evidence="7">
    <disease id="DI-07005">
        <name>Perrault syndrome 7</name>
        <acronym>PRLTS7</acronym>
        <description>A form of Perrault syndrome, a sex-influenced disorder characterized by sensorineural deafness in both males and females, and ovarian dysgenesis in females. Affected females have primary amenorrhea, streak gonads, and infertility, whereas affected males show normal pubertal development and are fertile. PRLTS7 inheritance is autosomal recessive. Some affected individuals present with neurologic features.</description>
        <dbReference type="MIM" id="621101"/>
    </disease>
    <text>The disease is caused by variants affecting the gene represented in this entry.</text>
</comment>
<comment type="similarity">
    <text evidence="15">Belongs to the mitochondrion-specific ribosomal protein mS29 family.</text>
</comment>
<comment type="sequence caution" evidence="15">
    <conflict type="frameshift">
        <sequence resource="EMBL-CDS" id="AAA57443"/>
    </conflict>
</comment>
<accession>P51398</accession>
<accession>B4DP59</accession>
<accession>B4DY62</accession>
<accession>E7EM60</accession>
<accession>Q13044</accession>
<accession>Q68CT7</accession>
<accession>Q96Q20</accession>
<reference key="1">
    <citation type="thesis" date="1993" institute="University of Stanford" country="United States">
        <title>The molecular genetics of human diseases with defective DNA damage processing.</title>
        <authorList>
            <person name="Henning K.A."/>
        </authorList>
    </citation>
    <scope>NUCLEOTIDE SEQUENCE [MRNA] (ISOFORM 1)</scope>
    <source>
        <tissue>Cervix carcinoma</tissue>
    </source>
</reference>
<reference key="2">
    <citation type="journal article" date="1995" name="J. Biol. Chem.">
        <title>Isolation of DAP3, a novel mediator of interferon-gamma-induced cell death.</title>
        <authorList>
            <person name="Kissil J.L."/>
            <person name="Deiss L.P."/>
            <person name="Bayewitch M."/>
            <person name="Raveh T."/>
            <person name="Khaspekov G."/>
            <person name="Kimchi A."/>
        </authorList>
    </citation>
    <scope>NUCLEOTIDE SEQUENCE [MRNA] (ISOFORM 1)</scope>
</reference>
<reference key="3">
    <citation type="journal article" date="2004" name="Nat. Genet.">
        <title>Complete sequencing and characterization of 21,243 full-length human cDNAs.</title>
        <authorList>
            <person name="Ota T."/>
            <person name="Suzuki Y."/>
            <person name="Nishikawa T."/>
            <person name="Otsuki T."/>
            <person name="Sugiyama T."/>
            <person name="Irie R."/>
            <person name="Wakamatsu A."/>
            <person name="Hayashi K."/>
            <person name="Sato H."/>
            <person name="Nagai K."/>
            <person name="Kimura K."/>
            <person name="Makita H."/>
            <person name="Sekine M."/>
            <person name="Obayashi M."/>
            <person name="Nishi T."/>
            <person name="Shibahara T."/>
            <person name="Tanaka T."/>
            <person name="Ishii S."/>
            <person name="Yamamoto J."/>
            <person name="Saito K."/>
            <person name="Kawai Y."/>
            <person name="Isono Y."/>
            <person name="Nakamura Y."/>
            <person name="Nagahari K."/>
            <person name="Murakami K."/>
            <person name="Yasuda T."/>
            <person name="Iwayanagi T."/>
            <person name="Wagatsuma M."/>
            <person name="Shiratori A."/>
            <person name="Sudo H."/>
            <person name="Hosoiri T."/>
            <person name="Kaku Y."/>
            <person name="Kodaira H."/>
            <person name="Kondo H."/>
            <person name="Sugawara M."/>
            <person name="Takahashi M."/>
            <person name="Kanda K."/>
            <person name="Yokoi T."/>
            <person name="Furuya T."/>
            <person name="Kikkawa E."/>
            <person name="Omura Y."/>
            <person name="Abe K."/>
            <person name="Kamihara K."/>
            <person name="Katsuta N."/>
            <person name="Sato K."/>
            <person name="Tanikawa M."/>
            <person name="Yamazaki M."/>
            <person name="Ninomiya K."/>
            <person name="Ishibashi T."/>
            <person name="Yamashita H."/>
            <person name="Murakawa K."/>
            <person name="Fujimori K."/>
            <person name="Tanai H."/>
            <person name="Kimata M."/>
            <person name="Watanabe M."/>
            <person name="Hiraoka S."/>
            <person name="Chiba Y."/>
            <person name="Ishida S."/>
            <person name="Ono Y."/>
            <person name="Takiguchi S."/>
            <person name="Watanabe S."/>
            <person name="Yosida M."/>
            <person name="Hotuta T."/>
            <person name="Kusano J."/>
            <person name="Kanehori K."/>
            <person name="Takahashi-Fujii A."/>
            <person name="Hara H."/>
            <person name="Tanase T.-O."/>
            <person name="Nomura Y."/>
            <person name="Togiya S."/>
            <person name="Komai F."/>
            <person name="Hara R."/>
            <person name="Takeuchi K."/>
            <person name="Arita M."/>
            <person name="Imose N."/>
            <person name="Musashino K."/>
            <person name="Yuuki H."/>
            <person name="Oshima A."/>
            <person name="Sasaki N."/>
            <person name="Aotsuka S."/>
            <person name="Yoshikawa Y."/>
            <person name="Matsunawa H."/>
            <person name="Ichihara T."/>
            <person name="Shiohata N."/>
            <person name="Sano S."/>
            <person name="Moriya S."/>
            <person name="Momiyama H."/>
            <person name="Satoh N."/>
            <person name="Takami S."/>
            <person name="Terashima Y."/>
            <person name="Suzuki O."/>
            <person name="Nakagawa S."/>
            <person name="Senoh A."/>
            <person name="Mizoguchi H."/>
            <person name="Goto Y."/>
            <person name="Shimizu F."/>
            <person name="Wakebe H."/>
            <person name="Hishigaki H."/>
            <person name="Watanabe T."/>
            <person name="Sugiyama A."/>
            <person name="Takemoto M."/>
            <person name="Kawakami B."/>
            <person name="Yamazaki M."/>
            <person name="Watanabe K."/>
            <person name="Kumagai A."/>
            <person name="Itakura S."/>
            <person name="Fukuzumi Y."/>
            <person name="Fujimori Y."/>
            <person name="Komiyama M."/>
            <person name="Tashiro H."/>
            <person name="Tanigami A."/>
            <person name="Fujiwara T."/>
            <person name="Ono T."/>
            <person name="Yamada K."/>
            <person name="Fujii Y."/>
            <person name="Ozaki K."/>
            <person name="Hirao M."/>
            <person name="Ohmori Y."/>
            <person name="Kawabata A."/>
            <person name="Hikiji T."/>
            <person name="Kobatake N."/>
            <person name="Inagaki H."/>
            <person name="Ikema Y."/>
            <person name="Okamoto S."/>
            <person name="Okitani R."/>
            <person name="Kawakami T."/>
            <person name="Noguchi S."/>
            <person name="Itoh T."/>
            <person name="Shigeta K."/>
            <person name="Senba T."/>
            <person name="Matsumura K."/>
            <person name="Nakajima Y."/>
            <person name="Mizuno T."/>
            <person name="Morinaga M."/>
            <person name="Sasaki M."/>
            <person name="Togashi T."/>
            <person name="Oyama M."/>
            <person name="Hata H."/>
            <person name="Watanabe M."/>
            <person name="Komatsu T."/>
            <person name="Mizushima-Sugano J."/>
            <person name="Satoh T."/>
            <person name="Shirai Y."/>
            <person name="Takahashi Y."/>
            <person name="Nakagawa K."/>
            <person name="Okumura K."/>
            <person name="Nagase T."/>
            <person name="Nomura N."/>
            <person name="Kikuchi H."/>
            <person name="Masuho Y."/>
            <person name="Yamashita R."/>
            <person name="Nakai K."/>
            <person name="Yada T."/>
            <person name="Nakamura Y."/>
            <person name="Ohara O."/>
            <person name="Isogai T."/>
            <person name="Sugano S."/>
        </authorList>
    </citation>
    <scope>NUCLEOTIDE SEQUENCE [LARGE SCALE MRNA] (ISOFORMS 1; 2 AND 3)</scope>
    <source>
        <tissue>Testis</tissue>
    </source>
</reference>
<reference key="4">
    <citation type="submission" date="2004-10" db="EMBL/GenBank/DDBJ databases">
        <title>Cloning of human full-length CDSs in BD Creator(TM) system donor vector.</title>
        <authorList>
            <person name="Kalnine N."/>
            <person name="Chen X."/>
            <person name="Rolfs A."/>
            <person name="Halleck A."/>
            <person name="Hines L."/>
            <person name="Eisenstein S."/>
            <person name="Koundinya M."/>
            <person name="Raphael J."/>
            <person name="Moreira D."/>
            <person name="Kelley T."/>
            <person name="LaBaer J."/>
            <person name="Lin Y."/>
            <person name="Phelan M."/>
            <person name="Farmer A."/>
        </authorList>
    </citation>
    <scope>NUCLEOTIDE SEQUENCE [LARGE SCALE MRNA] (ISOFORM 1)</scope>
</reference>
<reference key="5">
    <citation type="journal article" date="2007" name="BMC Genomics">
        <title>The full-ORF clone resource of the German cDNA consortium.</title>
        <authorList>
            <person name="Bechtel S."/>
            <person name="Rosenfelder H."/>
            <person name="Duda A."/>
            <person name="Schmidt C.P."/>
            <person name="Ernst U."/>
            <person name="Wellenreuther R."/>
            <person name="Mehrle A."/>
            <person name="Schuster C."/>
            <person name="Bahr A."/>
            <person name="Bloecker H."/>
            <person name="Heubner D."/>
            <person name="Hoerlein A."/>
            <person name="Michel G."/>
            <person name="Wedler H."/>
            <person name="Koehrer K."/>
            <person name="Ottenwaelder B."/>
            <person name="Poustka A."/>
            <person name="Wiemann S."/>
            <person name="Schupp I."/>
        </authorList>
    </citation>
    <scope>NUCLEOTIDE SEQUENCE [LARGE SCALE MRNA] (ISOFORM 1)</scope>
    <source>
        <tissue>Colon endothelium</tissue>
    </source>
</reference>
<reference key="6">
    <citation type="journal article" date="2006" name="Nature">
        <title>The DNA sequence and biological annotation of human chromosome 1.</title>
        <authorList>
            <person name="Gregory S.G."/>
            <person name="Barlow K.F."/>
            <person name="McLay K.E."/>
            <person name="Kaul R."/>
            <person name="Swarbreck D."/>
            <person name="Dunham A."/>
            <person name="Scott C.E."/>
            <person name="Howe K.L."/>
            <person name="Woodfine K."/>
            <person name="Spencer C.C.A."/>
            <person name="Jones M.C."/>
            <person name="Gillson C."/>
            <person name="Searle S."/>
            <person name="Zhou Y."/>
            <person name="Kokocinski F."/>
            <person name="McDonald L."/>
            <person name="Evans R."/>
            <person name="Phillips K."/>
            <person name="Atkinson A."/>
            <person name="Cooper R."/>
            <person name="Jones C."/>
            <person name="Hall R.E."/>
            <person name="Andrews T.D."/>
            <person name="Lloyd C."/>
            <person name="Ainscough R."/>
            <person name="Almeida J.P."/>
            <person name="Ambrose K.D."/>
            <person name="Anderson F."/>
            <person name="Andrew R.W."/>
            <person name="Ashwell R.I.S."/>
            <person name="Aubin K."/>
            <person name="Babbage A.K."/>
            <person name="Bagguley C.L."/>
            <person name="Bailey J."/>
            <person name="Beasley H."/>
            <person name="Bethel G."/>
            <person name="Bird C.P."/>
            <person name="Bray-Allen S."/>
            <person name="Brown J.Y."/>
            <person name="Brown A.J."/>
            <person name="Buckley D."/>
            <person name="Burton J."/>
            <person name="Bye J."/>
            <person name="Carder C."/>
            <person name="Chapman J.C."/>
            <person name="Clark S.Y."/>
            <person name="Clarke G."/>
            <person name="Clee C."/>
            <person name="Cobley V."/>
            <person name="Collier R.E."/>
            <person name="Corby N."/>
            <person name="Coville G.J."/>
            <person name="Davies J."/>
            <person name="Deadman R."/>
            <person name="Dunn M."/>
            <person name="Earthrowl M."/>
            <person name="Ellington A.G."/>
            <person name="Errington H."/>
            <person name="Frankish A."/>
            <person name="Frankland J."/>
            <person name="French L."/>
            <person name="Garner P."/>
            <person name="Garnett J."/>
            <person name="Gay L."/>
            <person name="Ghori M.R.J."/>
            <person name="Gibson R."/>
            <person name="Gilby L.M."/>
            <person name="Gillett W."/>
            <person name="Glithero R.J."/>
            <person name="Grafham D.V."/>
            <person name="Griffiths C."/>
            <person name="Griffiths-Jones S."/>
            <person name="Grocock R."/>
            <person name="Hammond S."/>
            <person name="Harrison E.S.I."/>
            <person name="Hart E."/>
            <person name="Haugen E."/>
            <person name="Heath P.D."/>
            <person name="Holmes S."/>
            <person name="Holt K."/>
            <person name="Howden P.J."/>
            <person name="Hunt A.R."/>
            <person name="Hunt S.E."/>
            <person name="Hunter G."/>
            <person name="Isherwood J."/>
            <person name="James R."/>
            <person name="Johnson C."/>
            <person name="Johnson D."/>
            <person name="Joy A."/>
            <person name="Kay M."/>
            <person name="Kershaw J.K."/>
            <person name="Kibukawa M."/>
            <person name="Kimberley A.M."/>
            <person name="King A."/>
            <person name="Knights A.J."/>
            <person name="Lad H."/>
            <person name="Laird G."/>
            <person name="Lawlor S."/>
            <person name="Leongamornlert D.A."/>
            <person name="Lloyd D.M."/>
            <person name="Loveland J."/>
            <person name="Lovell J."/>
            <person name="Lush M.J."/>
            <person name="Lyne R."/>
            <person name="Martin S."/>
            <person name="Mashreghi-Mohammadi M."/>
            <person name="Matthews L."/>
            <person name="Matthews N.S.W."/>
            <person name="McLaren S."/>
            <person name="Milne S."/>
            <person name="Mistry S."/>
            <person name="Moore M.J.F."/>
            <person name="Nickerson T."/>
            <person name="O'Dell C.N."/>
            <person name="Oliver K."/>
            <person name="Palmeiri A."/>
            <person name="Palmer S.A."/>
            <person name="Parker A."/>
            <person name="Patel D."/>
            <person name="Pearce A.V."/>
            <person name="Peck A.I."/>
            <person name="Pelan S."/>
            <person name="Phelps K."/>
            <person name="Phillimore B.J."/>
            <person name="Plumb R."/>
            <person name="Rajan J."/>
            <person name="Raymond C."/>
            <person name="Rouse G."/>
            <person name="Saenphimmachak C."/>
            <person name="Sehra H.K."/>
            <person name="Sheridan E."/>
            <person name="Shownkeen R."/>
            <person name="Sims S."/>
            <person name="Skuce C.D."/>
            <person name="Smith M."/>
            <person name="Steward C."/>
            <person name="Subramanian S."/>
            <person name="Sycamore N."/>
            <person name="Tracey A."/>
            <person name="Tromans A."/>
            <person name="Van Helmond Z."/>
            <person name="Wall M."/>
            <person name="Wallis J.M."/>
            <person name="White S."/>
            <person name="Whitehead S.L."/>
            <person name="Wilkinson J.E."/>
            <person name="Willey D.L."/>
            <person name="Williams H."/>
            <person name="Wilming L."/>
            <person name="Wray P.W."/>
            <person name="Wu Z."/>
            <person name="Coulson A."/>
            <person name="Vaudin M."/>
            <person name="Sulston J.E."/>
            <person name="Durbin R.M."/>
            <person name="Hubbard T."/>
            <person name="Wooster R."/>
            <person name="Dunham I."/>
            <person name="Carter N.P."/>
            <person name="McVean G."/>
            <person name="Ross M.T."/>
            <person name="Harrow J."/>
            <person name="Olson M.V."/>
            <person name="Beck S."/>
            <person name="Rogers J."/>
            <person name="Bentley D.R."/>
        </authorList>
    </citation>
    <scope>NUCLEOTIDE SEQUENCE [LARGE SCALE GENOMIC DNA]</scope>
</reference>
<reference key="7">
    <citation type="submission" date="2005-09" db="EMBL/GenBank/DDBJ databases">
        <authorList>
            <person name="Mural R.J."/>
            <person name="Istrail S."/>
            <person name="Sutton G.G."/>
            <person name="Florea L."/>
            <person name="Halpern A.L."/>
            <person name="Mobarry C.M."/>
            <person name="Lippert R."/>
            <person name="Walenz B."/>
            <person name="Shatkay H."/>
            <person name="Dew I."/>
            <person name="Miller J.R."/>
            <person name="Flanigan M.J."/>
            <person name="Edwards N.J."/>
            <person name="Bolanos R."/>
            <person name="Fasulo D."/>
            <person name="Halldorsson B.V."/>
            <person name="Hannenhalli S."/>
            <person name="Turner R."/>
            <person name="Yooseph S."/>
            <person name="Lu F."/>
            <person name="Nusskern D.R."/>
            <person name="Shue B.C."/>
            <person name="Zheng X.H."/>
            <person name="Zhong F."/>
            <person name="Delcher A.L."/>
            <person name="Huson D.H."/>
            <person name="Kravitz S.A."/>
            <person name="Mouchard L."/>
            <person name="Reinert K."/>
            <person name="Remington K.A."/>
            <person name="Clark A.G."/>
            <person name="Waterman M.S."/>
            <person name="Eichler E.E."/>
            <person name="Adams M.D."/>
            <person name="Hunkapiller M.W."/>
            <person name="Myers E.W."/>
            <person name="Venter J.C."/>
        </authorList>
    </citation>
    <scope>NUCLEOTIDE SEQUENCE [LARGE SCALE GENOMIC DNA]</scope>
</reference>
<reference key="8">
    <citation type="journal article" date="2004" name="Genome Res.">
        <title>The status, quality, and expansion of the NIH full-length cDNA project: the Mammalian Gene Collection (MGC).</title>
        <authorList>
            <consortium name="The MGC Project Team"/>
        </authorList>
    </citation>
    <scope>NUCLEOTIDE SEQUENCE [LARGE SCALE MRNA] (ISOFORM 1)</scope>
</reference>
<reference key="9">
    <citation type="journal article" date="2001" name="Genomics">
        <title>The human mitochondrial ribosomal protein genes: mapping of 54 genes to the chromosomes and implications for human disorders.</title>
        <authorList>
            <person name="Kenmochi N."/>
            <person name="Suzuki T."/>
            <person name="Uechi T."/>
            <person name="Magoori M."/>
            <person name="Kuniba M."/>
            <person name="Higa S."/>
            <person name="Watanabe K."/>
            <person name="Tanaka T."/>
        </authorList>
    </citation>
    <scope>NUCLEOTIDE SEQUENCE [GENOMIC DNA] OF 202-235</scope>
</reference>
<reference key="10">
    <citation type="journal article" date="2001" name="Biochem. Biophys. Res. Commun.">
        <title>A conserved N-terminal sequence targets human DAP3 to mitochondria.</title>
        <authorList>
            <person name="Morgan C.J."/>
            <person name="Jacques C."/>
            <person name="Savagner F."/>
            <person name="Tourmen Y."/>
            <person name="Mirebeau D.P."/>
            <person name="Malthiery Y."/>
            <person name="Reynier P."/>
        </authorList>
    </citation>
    <scope>SUBCELLULAR LOCATION</scope>
</reference>
<reference key="11">
    <citation type="journal article" date="2001" name="J. Biol. Chem.">
        <title>The small subunit of the mammalian mitochondrial ribosome: identification of the full complement of ribosomal proteins present.</title>
        <authorList>
            <person name="Koc E.C."/>
            <person name="Burkhart W."/>
            <person name="Blackburn K."/>
            <person name="Moseley A."/>
            <person name="Spremulli L.L."/>
        </authorList>
    </citation>
    <scope>IDENTIFICATION</scope>
</reference>
<reference key="12">
    <citation type="journal article" date="2009" name="J. Biol. Chem.">
        <title>hNOA1 interacts with complex I and DAP3 and regulates mitochondrial respiration and apoptosis.</title>
        <authorList>
            <person name="Tang T."/>
            <person name="Zheng B."/>
            <person name="Chen S.H."/>
            <person name="Murphy A.N."/>
            <person name="Kudlicka K."/>
            <person name="Zhou H."/>
            <person name="Farquhar M.G."/>
        </authorList>
    </citation>
    <scope>INTERACTION WITH NOA1</scope>
</reference>
<reference key="13">
    <citation type="journal article" date="2009" name="Science">
        <title>Lysine acetylation targets protein complexes and co-regulates major cellular functions.</title>
        <authorList>
            <person name="Choudhary C."/>
            <person name="Kumar C."/>
            <person name="Gnad F."/>
            <person name="Nielsen M.L."/>
            <person name="Rehman M."/>
            <person name="Walther T.C."/>
            <person name="Olsen J.V."/>
            <person name="Mann M."/>
        </authorList>
    </citation>
    <scope>ACETYLATION [LARGE SCALE ANALYSIS] AT LYS-175 AND LYS-207</scope>
    <scope>IDENTIFICATION BY MASS SPECTROMETRY [LARGE SCALE ANALYSIS]</scope>
</reference>
<reference key="14">
    <citation type="journal article" date="2010" name="Apoptosis">
        <title>Identification of DELE, a novel DAP3-binding protein which is crucial for death receptor-mediated apoptosis induction.</title>
        <authorList>
            <person name="Harada T."/>
            <person name="Iwai A."/>
            <person name="Miyazaki T."/>
        </authorList>
    </citation>
    <scope>SUBCELLULAR LOCATION</scope>
    <scope>INTERACTION WITH DELE1</scope>
</reference>
<reference key="15">
    <citation type="journal article" date="2011" name="BMC Syst. Biol.">
        <title>Initial characterization of the human central proteome.</title>
        <authorList>
            <person name="Burkard T.R."/>
            <person name="Planyavsky M."/>
            <person name="Kaupe I."/>
            <person name="Breitwieser F.P."/>
            <person name="Buerckstuemmer T."/>
            <person name="Bennett K.L."/>
            <person name="Superti-Furga G."/>
            <person name="Colinge J."/>
        </authorList>
    </citation>
    <scope>IDENTIFICATION BY MASS SPECTROMETRY [LARGE SCALE ANALYSIS]</scope>
</reference>
<reference key="16">
    <citation type="journal article" date="2015" name="Proteomics">
        <title>N-terminome analysis of the human mitochondrial proteome.</title>
        <authorList>
            <person name="Vaca Jacome A.S."/>
            <person name="Rabilloud T."/>
            <person name="Schaeffer-Reiss C."/>
            <person name="Rompais M."/>
            <person name="Ayoub D."/>
            <person name="Lane L."/>
            <person name="Bairoch A."/>
            <person name="Van Dorsselaer A."/>
            <person name="Carapito C."/>
        </authorList>
    </citation>
    <scope>IDENTIFICATION BY MASS SPECTROMETRY [LARGE SCALE ANALYSIS]</scope>
</reference>
<reference key="17">
    <citation type="journal article" date="2015" name="Science">
        <title>Ribosome. The structure of the human mitochondrial ribosome.</title>
        <authorList>
            <person name="Amunts A."/>
            <person name="Brown A."/>
            <person name="Toots J."/>
            <person name="Scheres S.H."/>
            <person name="Ramakrishnan V."/>
        </authorList>
    </citation>
    <scope>STRUCTURE BY ELECTRON MICROSCOPY (3.50 ANGSTROMS)</scope>
    <scope>SUBUNIT</scope>
</reference>
<reference key="18">
    <citation type="journal article" date="2025" name="Am. J. Hum. Genet.">
        <title>Bi-allelic variants in DAP3 result in reduced assembly of the mitoribosomal small subunit with altered apoptosis and a Perrault-syndrome-spectrum phenotype.</title>
        <authorList>
            <consortium name="DDD Study"/>
            <person name="Smith T.B."/>
            <person name="Kopajtich R."/>
            <person name="Demain L.A.M."/>
            <person name="Rea A."/>
            <person name="Thomas H.B."/>
            <person name="Schiff M."/>
            <person name="Beetz C."/>
            <person name="Joss S."/>
            <person name="Conway G.S."/>
            <person name="Shukla A."/>
            <person name="Yeole M."/>
            <person name="Radhakrishnan P."/>
            <person name="Azzouz H."/>
            <person name="Ben Chehida A."/>
            <person name="Elmaleh-Berges M."/>
            <person name="Glasgow R.I.C."/>
            <person name="Thompson K."/>
            <person name="Olahova M."/>
            <person name="He L."/>
            <person name="Jenkinson E.M."/>
            <person name="Jahic A."/>
            <person name="Belyantseva I.A."/>
            <person name="Barzik M."/>
            <person name="Urquhart J.E."/>
            <person name="O'Sullivan J."/>
            <person name="Williams S.G."/>
            <person name="Bhaskar S.S."/>
            <person name="Carrera S."/>
            <person name="Blakes A.J.M."/>
            <person name="Banka S."/>
            <person name="Yue W.W."/>
            <person name="Ellingford J.M."/>
            <person name="Houlden H."/>
            <person name="Munro K.J."/>
            <person name="Friedman T.B."/>
            <person name="Taylor R.W."/>
            <person name="Prokisch H."/>
            <person name="O'Keefe R.T."/>
            <person name="Newman W.G."/>
        </authorList>
    </citation>
    <scope>VARIANTS PRLTS7 ILE-132; ARG-380; LYS-392 AND TYR-395</scope>
    <scope>CHARACTERIZATION OF VARIANTS PRLTS7 ILE-132; ARG-380; LYS-392 AND TYR-395</scope>
    <scope>INVOLVEMENT IN PRLTS7</scope>
    <scope>FUNCTION</scope>
    <scope>CATALYTIC ACTIVITY</scope>
</reference>
<sequence>MMLKGITRLISRIHKLDPGRFLHMGTQARQSIAAHLDNQVPVESPRAISRTNENDPAKHGDQHEGQHYNISPQDLETVFPHGLPPRFVMQVKTFSEACLMVRKPALELLHYLKNTSFAYPAIRYLLYGEKGTGKTLSLCHVIHFCAKQDWLILHIPDAHLWVKNCRDLLQSSYNKQRFDQPLEASTWLKNFKTTNERFLNQIKVQEKYVWNKRESTEKGSPLGEVVEQGITRVRNATDAVGIVLKELKRQSSLGMFHLLVAVDGINALWGRTTLKREDKSPIAPEELALVHNLRKMMKNDWHGGAIVSALSQTGSLFKPRKAYLPQELLGKEGFDALDPFIPILVSNYNPKEFESCIQYYLENNWLQHEKAPTEEGKKELLFLSNANPSLLERHCAYL</sequence>
<evidence type="ECO:0000255" key="1"/>
<evidence type="ECO:0000256" key="2">
    <source>
        <dbReference type="SAM" id="MobiDB-lite"/>
    </source>
</evidence>
<evidence type="ECO:0000269" key="3">
    <source>
    </source>
</evidence>
<evidence type="ECO:0000269" key="4">
    <source>
    </source>
</evidence>
<evidence type="ECO:0000269" key="5">
    <source>
    </source>
</evidence>
<evidence type="ECO:0000269" key="6">
    <source>
    </source>
</evidence>
<evidence type="ECO:0000269" key="7">
    <source>
    </source>
</evidence>
<evidence type="ECO:0000269" key="8">
    <source>
    </source>
</evidence>
<evidence type="ECO:0000303" key="9">
    <source>
    </source>
</evidence>
<evidence type="ECO:0000303" key="10">
    <source>
    </source>
</evidence>
<evidence type="ECO:0000303" key="11">
    <source>
    </source>
</evidence>
<evidence type="ECO:0000303" key="12">
    <source>
    </source>
</evidence>
<evidence type="ECO:0000303" key="13">
    <source ref="1"/>
</evidence>
<evidence type="ECO:0000303" key="14">
    <source ref="4"/>
</evidence>
<evidence type="ECO:0000305" key="15"/>
<evidence type="ECO:0000305" key="16">
    <source>
    </source>
</evidence>
<evidence type="ECO:0000305" key="17">
    <source>
    </source>
</evidence>
<evidence type="ECO:0007744" key="18">
    <source>
    </source>
</evidence>
<evidence type="ECO:0007829" key="19">
    <source>
        <dbReference type="PDB" id="8CSS"/>
    </source>
</evidence>
<evidence type="ECO:0007829" key="20">
    <source>
        <dbReference type="PDB" id="8QRL"/>
    </source>
</evidence>
<keyword id="KW-0002">3D-structure</keyword>
<keyword id="KW-0007">Acetylation</keyword>
<keyword id="KW-0025">Alternative splicing</keyword>
<keyword id="KW-0053">Apoptosis</keyword>
<keyword id="KW-0209">Deafness</keyword>
<keyword id="KW-0225">Disease variant</keyword>
<keyword id="KW-0342">GTP-binding</keyword>
<keyword id="KW-0378">Hydrolase</keyword>
<keyword id="KW-0496">Mitochondrion</keyword>
<keyword id="KW-0547">Nucleotide-binding</keyword>
<keyword id="KW-1267">Proteomics identification</keyword>
<keyword id="KW-1185">Reference proteome</keyword>
<keyword id="KW-0687">Ribonucleoprotein</keyword>
<keyword id="KW-0689">Ribosomal protein</keyword>
<keyword id="KW-0809">Transit peptide</keyword>